<reference key="1">
    <citation type="journal article" date="2009" name="BMC Genomics">
        <title>Evidence for niche adaptation in the genome of the bovine pathogen Streptococcus uberis.</title>
        <authorList>
            <person name="Ward P.N."/>
            <person name="Holden M.T.G."/>
            <person name="Leigh J.A."/>
            <person name="Lennard N."/>
            <person name="Bignell A."/>
            <person name="Barron A."/>
            <person name="Clark L."/>
            <person name="Quail M.A."/>
            <person name="Woodward J."/>
            <person name="Barrell B.G."/>
            <person name="Egan S.A."/>
            <person name="Field T.R."/>
            <person name="Maskell D."/>
            <person name="Kehoe M."/>
            <person name="Dowson C.G."/>
            <person name="Chanter N."/>
            <person name="Whatmore A.M."/>
            <person name="Bentley S.D."/>
            <person name="Parkhill J."/>
        </authorList>
    </citation>
    <scope>NUCLEOTIDE SEQUENCE [LARGE SCALE GENOMIC DNA]</scope>
    <source>
        <strain>ATCC BAA-854 / 0140J</strain>
    </source>
</reference>
<comment type="catalytic activity">
    <reaction evidence="1">
        <text>2-formamido-N(1)-(5-O-phospho-beta-D-ribosyl)acetamidine + ATP = 5-amino-1-(5-phospho-beta-D-ribosyl)imidazole + ADP + phosphate + H(+)</text>
        <dbReference type="Rhea" id="RHEA:23032"/>
        <dbReference type="ChEBI" id="CHEBI:15378"/>
        <dbReference type="ChEBI" id="CHEBI:30616"/>
        <dbReference type="ChEBI" id="CHEBI:43474"/>
        <dbReference type="ChEBI" id="CHEBI:137981"/>
        <dbReference type="ChEBI" id="CHEBI:147287"/>
        <dbReference type="ChEBI" id="CHEBI:456216"/>
        <dbReference type="EC" id="6.3.3.1"/>
    </reaction>
</comment>
<comment type="pathway">
    <text evidence="1">Purine metabolism; IMP biosynthesis via de novo pathway; 5-amino-1-(5-phospho-D-ribosyl)imidazole from N(2)-formyl-N(1)-(5-phospho-D-ribosyl)glycinamide: step 2/2.</text>
</comment>
<comment type="subcellular location">
    <subcellularLocation>
        <location evidence="1">Cytoplasm</location>
    </subcellularLocation>
</comment>
<comment type="similarity">
    <text evidence="1">Belongs to the AIR synthase family.</text>
</comment>
<proteinExistence type="inferred from homology"/>
<name>PUR5_STRU0</name>
<sequence length="340" mass="36577">MTEKNAYAQSGVDVEAGYEVVERIKKHVARTERAGVMGALGGFGGMFDLSKTGVKEPVLISGTDGVGTKLMLAIKYDKHDTIGQDCVAMCVNDIIAAGAEPLYFLDYIATGKNEPAKLEQVVAGVAEGCVQAGAALIGGETAEMPGMYGEDDYDLAGFAVGIAEKSQIIDGSKVSEGDVLLGLASSGIHSNGYSLVRRVFADYEGEAILPELEGKALKEVLLEPTRIYVKAVLPLVKENLVNGIAHITGGGFIENVPRMFSEELAAEIWEEKVPVLPIFKALETYGEIKHDEMFEIFNMGIGMMLAVKAENVARVKELLDEPVYEIGRIIKKEDKSVIIK</sequence>
<protein>
    <recommendedName>
        <fullName evidence="1">Phosphoribosylformylglycinamidine cyclo-ligase</fullName>
        <ecNumber evidence="1">6.3.3.1</ecNumber>
    </recommendedName>
    <alternativeName>
        <fullName evidence="1">AIR synthase</fullName>
    </alternativeName>
    <alternativeName>
        <fullName evidence="1">AIRS</fullName>
    </alternativeName>
    <alternativeName>
        <fullName evidence="1">Phosphoribosyl-aminoimidazole synthetase</fullName>
    </alternativeName>
</protein>
<feature type="chain" id="PRO_1000148301" description="Phosphoribosylformylglycinamidine cyclo-ligase">
    <location>
        <begin position="1"/>
        <end position="340"/>
    </location>
</feature>
<evidence type="ECO:0000255" key="1">
    <source>
        <dbReference type="HAMAP-Rule" id="MF_00741"/>
    </source>
</evidence>
<accession>B9DSR4</accession>
<organism>
    <name type="scientific">Streptococcus uberis (strain ATCC BAA-854 / 0140J)</name>
    <dbReference type="NCBI Taxonomy" id="218495"/>
    <lineage>
        <taxon>Bacteria</taxon>
        <taxon>Bacillati</taxon>
        <taxon>Bacillota</taxon>
        <taxon>Bacilli</taxon>
        <taxon>Lactobacillales</taxon>
        <taxon>Streptococcaceae</taxon>
        <taxon>Streptococcus</taxon>
    </lineage>
</organism>
<keyword id="KW-0067">ATP-binding</keyword>
<keyword id="KW-0963">Cytoplasm</keyword>
<keyword id="KW-0436">Ligase</keyword>
<keyword id="KW-0547">Nucleotide-binding</keyword>
<keyword id="KW-0658">Purine biosynthesis</keyword>
<keyword id="KW-1185">Reference proteome</keyword>
<dbReference type="EC" id="6.3.3.1" evidence="1"/>
<dbReference type="EMBL" id="AM946015">
    <property type="protein sequence ID" value="CAR40369.1"/>
    <property type="molecule type" value="Genomic_DNA"/>
</dbReference>
<dbReference type="RefSeq" id="WP_012657598.1">
    <property type="nucleotide sequence ID" value="NC_012004.1"/>
</dbReference>
<dbReference type="SMR" id="B9DSR4"/>
<dbReference type="STRING" id="218495.SUB0028"/>
<dbReference type="GeneID" id="93825267"/>
<dbReference type="KEGG" id="sub:SUB0028"/>
<dbReference type="eggNOG" id="COG0150">
    <property type="taxonomic scope" value="Bacteria"/>
</dbReference>
<dbReference type="HOGENOM" id="CLU_047116_0_0_9"/>
<dbReference type="OrthoDB" id="9802507at2"/>
<dbReference type="UniPathway" id="UPA00074">
    <property type="reaction ID" value="UER00129"/>
</dbReference>
<dbReference type="Proteomes" id="UP000000449">
    <property type="component" value="Chromosome"/>
</dbReference>
<dbReference type="GO" id="GO:0005829">
    <property type="term" value="C:cytosol"/>
    <property type="evidence" value="ECO:0007669"/>
    <property type="project" value="TreeGrafter"/>
</dbReference>
<dbReference type="GO" id="GO:0005524">
    <property type="term" value="F:ATP binding"/>
    <property type="evidence" value="ECO:0007669"/>
    <property type="project" value="UniProtKB-KW"/>
</dbReference>
<dbReference type="GO" id="GO:0004637">
    <property type="term" value="F:phosphoribosylamine-glycine ligase activity"/>
    <property type="evidence" value="ECO:0007669"/>
    <property type="project" value="TreeGrafter"/>
</dbReference>
<dbReference type="GO" id="GO:0004641">
    <property type="term" value="F:phosphoribosylformylglycinamidine cyclo-ligase activity"/>
    <property type="evidence" value="ECO:0007669"/>
    <property type="project" value="UniProtKB-UniRule"/>
</dbReference>
<dbReference type="GO" id="GO:0006189">
    <property type="term" value="P:'de novo' IMP biosynthetic process"/>
    <property type="evidence" value="ECO:0007669"/>
    <property type="project" value="UniProtKB-UniRule"/>
</dbReference>
<dbReference type="GO" id="GO:0046084">
    <property type="term" value="P:adenine biosynthetic process"/>
    <property type="evidence" value="ECO:0007669"/>
    <property type="project" value="TreeGrafter"/>
</dbReference>
<dbReference type="CDD" id="cd02196">
    <property type="entry name" value="PurM"/>
    <property type="match status" value="1"/>
</dbReference>
<dbReference type="FunFam" id="3.30.1330.10:FF:000001">
    <property type="entry name" value="Phosphoribosylformylglycinamidine cyclo-ligase"/>
    <property type="match status" value="1"/>
</dbReference>
<dbReference type="FunFam" id="3.90.650.10:FF:000011">
    <property type="entry name" value="Phosphoribosylformylglycinamidine cyclo-ligase"/>
    <property type="match status" value="1"/>
</dbReference>
<dbReference type="Gene3D" id="3.90.650.10">
    <property type="entry name" value="PurM-like C-terminal domain"/>
    <property type="match status" value="1"/>
</dbReference>
<dbReference type="Gene3D" id="3.30.1330.10">
    <property type="entry name" value="PurM-like, N-terminal domain"/>
    <property type="match status" value="1"/>
</dbReference>
<dbReference type="HAMAP" id="MF_00741">
    <property type="entry name" value="AIRS"/>
    <property type="match status" value="1"/>
</dbReference>
<dbReference type="InterPro" id="IPR010918">
    <property type="entry name" value="PurM-like_C_dom"/>
</dbReference>
<dbReference type="InterPro" id="IPR036676">
    <property type="entry name" value="PurM-like_C_sf"/>
</dbReference>
<dbReference type="InterPro" id="IPR016188">
    <property type="entry name" value="PurM-like_N"/>
</dbReference>
<dbReference type="InterPro" id="IPR036921">
    <property type="entry name" value="PurM-like_N_sf"/>
</dbReference>
<dbReference type="InterPro" id="IPR004733">
    <property type="entry name" value="PurM_cligase"/>
</dbReference>
<dbReference type="NCBIfam" id="TIGR00878">
    <property type="entry name" value="purM"/>
    <property type="match status" value="1"/>
</dbReference>
<dbReference type="PANTHER" id="PTHR10520:SF12">
    <property type="entry name" value="TRIFUNCTIONAL PURINE BIOSYNTHETIC PROTEIN ADENOSINE-3"/>
    <property type="match status" value="1"/>
</dbReference>
<dbReference type="PANTHER" id="PTHR10520">
    <property type="entry name" value="TRIFUNCTIONAL PURINE BIOSYNTHETIC PROTEIN ADENOSINE-3-RELATED"/>
    <property type="match status" value="1"/>
</dbReference>
<dbReference type="Pfam" id="PF00586">
    <property type="entry name" value="AIRS"/>
    <property type="match status" value="1"/>
</dbReference>
<dbReference type="Pfam" id="PF02769">
    <property type="entry name" value="AIRS_C"/>
    <property type="match status" value="1"/>
</dbReference>
<dbReference type="SUPFAM" id="SSF56042">
    <property type="entry name" value="PurM C-terminal domain-like"/>
    <property type="match status" value="1"/>
</dbReference>
<dbReference type="SUPFAM" id="SSF55326">
    <property type="entry name" value="PurM N-terminal domain-like"/>
    <property type="match status" value="1"/>
</dbReference>
<gene>
    <name evidence="1" type="primary">purM</name>
    <name type="ordered locus">SUB0028</name>
</gene>